<accession>Q90YI3</accession>
<comment type="catalytic activity">
    <reaction>
        <text>tRNA(Met) + L-methionine + ATP = L-methionyl-tRNA(Met) + AMP + diphosphate</text>
        <dbReference type="Rhea" id="RHEA:13481"/>
        <dbReference type="Rhea" id="RHEA-COMP:9667"/>
        <dbReference type="Rhea" id="RHEA-COMP:9698"/>
        <dbReference type="ChEBI" id="CHEBI:30616"/>
        <dbReference type="ChEBI" id="CHEBI:33019"/>
        <dbReference type="ChEBI" id="CHEBI:57844"/>
        <dbReference type="ChEBI" id="CHEBI:78442"/>
        <dbReference type="ChEBI" id="CHEBI:78530"/>
        <dbReference type="ChEBI" id="CHEBI:456215"/>
        <dbReference type="EC" id="6.1.1.10"/>
    </reaction>
</comment>
<comment type="subcellular location">
    <subcellularLocation>
        <location evidence="1">Mitochondrion matrix</location>
    </subcellularLocation>
</comment>
<comment type="similarity">
    <text evidence="4">Belongs to the class-I aminoacyl-tRNA synthetase family.</text>
</comment>
<name>SYMM_TAKRU</name>
<organism>
    <name type="scientific">Takifugu rubripes</name>
    <name type="common">Japanese pufferfish</name>
    <name type="synonym">Fugu rubripes</name>
    <dbReference type="NCBI Taxonomy" id="31033"/>
    <lineage>
        <taxon>Eukaryota</taxon>
        <taxon>Metazoa</taxon>
        <taxon>Chordata</taxon>
        <taxon>Craniata</taxon>
        <taxon>Vertebrata</taxon>
        <taxon>Euteleostomi</taxon>
        <taxon>Actinopterygii</taxon>
        <taxon>Neopterygii</taxon>
        <taxon>Teleostei</taxon>
        <taxon>Neoteleostei</taxon>
        <taxon>Acanthomorphata</taxon>
        <taxon>Eupercaria</taxon>
        <taxon>Tetraodontiformes</taxon>
        <taxon>Tetradontoidea</taxon>
        <taxon>Tetraodontidae</taxon>
        <taxon>Takifugu</taxon>
    </lineage>
</organism>
<proteinExistence type="inferred from homology"/>
<protein>
    <recommendedName>
        <fullName>Methionine--tRNA ligase, mitochondrial</fullName>
        <ecNumber>6.1.1.10</ecNumber>
    </recommendedName>
    <alternativeName>
        <fullName>Methionyl-tRNA synthetase 2</fullName>
    </alternativeName>
    <alternativeName>
        <fullName>Mitochondrial methionyl-tRNA synthetase</fullName>
        <shortName>MtMetRS</shortName>
    </alternativeName>
</protein>
<sequence length="590" mass="67664">MRTRFLFLTSGCKAVPELHKIVLANAAPVKNPEIRYASTENRNYYITTPIFYVNASPHLGHLYSAVIADCFHRHKQLQGFNSRFATGTDEHGLKIQQAAEAAGKEPLEFCTTVSERFRHLFSSCNISNTDYIRTTEQRHHRAVQHFWSVLCSKGLIYKGSYEGWYSTQDESFLTPSQVTTALDSTGKEIKVSLESGHKVEWMKEENYMFRLSGFRSQLLDWLRENPRAIQPERFHHSVLQWLQEELPDLSVSRQKSRLQWGIPVPEDDGQTIYVWLDALVNYLTVVGYPNNHERWWNVAHHIIGKDILKFHAIYWPSFLLGAGLPLPQTIHVHSHWTVAGKKMSKSLGNVIDPQERSQLFTTDGLRYFLLRQGVPDTDCDYRDDKVVKLLNAELADALGGLLNRCTATALNPAQVYASFCPDSFPRERGGRADDDDYRMLESVRHLPAVVEQHFEDMHVYKALEAVSTCVRQTNGFVQRHAPWKLDRKDSADQRWLGTIIHVSLECLRIYGTLLQPVVPEISNKLLSRLGVQPHERSWTNLNFLPRFEGKDCPFEGRALGSDSGVLFSRLESQRADQQKNRKMEKGSNLK</sequence>
<reference key="1">
    <citation type="submission" date="2001-07" db="EMBL/GenBank/DDBJ databases">
        <title>Three way comparative genomic analysis of the BTK locus between man, mouse and Fugu.</title>
        <authorList>
            <person name="Goode D."/>
            <person name="Elgar G."/>
        </authorList>
    </citation>
    <scope>NUCLEOTIDE SEQUENCE [GENOMIC DNA]</scope>
</reference>
<keyword id="KW-0030">Aminoacyl-tRNA synthetase</keyword>
<keyword id="KW-0067">ATP-binding</keyword>
<keyword id="KW-0436">Ligase</keyword>
<keyword id="KW-0496">Mitochondrion</keyword>
<keyword id="KW-0547">Nucleotide-binding</keyword>
<keyword id="KW-0648">Protein biosynthesis</keyword>
<keyword id="KW-1185">Reference proteome</keyword>
<keyword id="KW-0809">Transit peptide</keyword>
<evidence type="ECO:0000250" key="1"/>
<evidence type="ECO:0000255" key="2"/>
<evidence type="ECO:0000256" key="3">
    <source>
        <dbReference type="SAM" id="MobiDB-lite"/>
    </source>
</evidence>
<evidence type="ECO:0000305" key="4"/>
<feature type="transit peptide" description="Mitochondrion" evidence="2">
    <location>
        <begin position="1"/>
        <end position="26"/>
    </location>
</feature>
<feature type="chain" id="PRO_0000045495" description="Methionine--tRNA ligase, mitochondrial">
    <location>
        <begin position="27"/>
        <end position="590"/>
    </location>
</feature>
<feature type="region of interest" description="Disordered" evidence="3">
    <location>
        <begin position="570"/>
        <end position="590"/>
    </location>
</feature>
<feature type="short sequence motif" description="'HIGH' region">
    <location>
        <begin position="51"/>
        <end position="61"/>
    </location>
</feature>
<feature type="short sequence motif" description="'KMSKS' region">
    <location>
        <begin position="342"/>
        <end position="346"/>
    </location>
</feature>
<feature type="compositionally biased region" description="Basic and acidic residues" evidence="3">
    <location>
        <begin position="571"/>
        <end position="590"/>
    </location>
</feature>
<feature type="binding site" evidence="1">
    <location>
        <position position="345"/>
    </location>
    <ligand>
        <name>ATP</name>
        <dbReference type="ChEBI" id="CHEBI:30616"/>
    </ligand>
</feature>
<gene>
    <name type="primary">mars2</name>
</gene>
<dbReference type="EC" id="6.1.1.10"/>
<dbReference type="EMBL" id="AJ290422">
    <property type="protein sequence ID" value="CAC44631.1"/>
    <property type="molecule type" value="Genomic_DNA"/>
</dbReference>
<dbReference type="SMR" id="Q90YI3"/>
<dbReference type="FunCoup" id="Q90YI3">
    <property type="interactions" value="861"/>
</dbReference>
<dbReference type="STRING" id="31033.ENSTRUP00000031960"/>
<dbReference type="eggNOG" id="KOG0436">
    <property type="taxonomic scope" value="Eukaryota"/>
</dbReference>
<dbReference type="HOGENOM" id="CLU_009710_9_0_1"/>
<dbReference type="InParanoid" id="Q90YI3"/>
<dbReference type="OrthoDB" id="24670at2759"/>
<dbReference type="TreeFam" id="TF105709"/>
<dbReference type="Proteomes" id="UP000005226">
    <property type="component" value="Unplaced"/>
</dbReference>
<dbReference type="GO" id="GO:0005759">
    <property type="term" value="C:mitochondrial matrix"/>
    <property type="evidence" value="ECO:0007669"/>
    <property type="project" value="UniProtKB-SubCell"/>
</dbReference>
<dbReference type="GO" id="GO:0005524">
    <property type="term" value="F:ATP binding"/>
    <property type="evidence" value="ECO:0007669"/>
    <property type="project" value="UniProtKB-KW"/>
</dbReference>
<dbReference type="GO" id="GO:0004825">
    <property type="term" value="F:methionine-tRNA ligase activity"/>
    <property type="evidence" value="ECO:0007669"/>
    <property type="project" value="UniProtKB-EC"/>
</dbReference>
<dbReference type="GO" id="GO:0006431">
    <property type="term" value="P:methionyl-tRNA aminoacylation"/>
    <property type="evidence" value="ECO:0007669"/>
    <property type="project" value="InterPro"/>
</dbReference>
<dbReference type="CDD" id="cd07957">
    <property type="entry name" value="Anticodon_Ia_Met"/>
    <property type="match status" value="1"/>
</dbReference>
<dbReference type="CDD" id="cd00814">
    <property type="entry name" value="MetRS_core"/>
    <property type="match status" value="1"/>
</dbReference>
<dbReference type="FunFam" id="2.170.220.10:FF:000001">
    <property type="entry name" value="methionine--tRNA ligase, mitochondrial"/>
    <property type="match status" value="1"/>
</dbReference>
<dbReference type="FunFam" id="1.10.730.10:FF:000022">
    <property type="entry name" value="Methionyl-tRNA synthetase 2, mitochondrial"/>
    <property type="match status" value="1"/>
</dbReference>
<dbReference type="Gene3D" id="2.170.220.10">
    <property type="match status" value="1"/>
</dbReference>
<dbReference type="Gene3D" id="3.40.50.620">
    <property type="entry name" value="HUPs"/>
    <property type="match status" value="1"/>
</dbReference>
<dbReference type="Gene3D" id="1.10.730.10">
    <property type="entry name" value="Isoleucyl-tRNA Synthetase, Domain 1"/>
    <property type="match status" value="1"/>
</dbReference>
<dbReference type="InterPro" id="IPR041872">
    <property type="entry name" value="Anticodon_Met"/>
</dbReference>
<dbReference type="InterPro" id="IPR014758">
    <property type="entry name" value="Met-tRNA_synth"/>
</dbReference>
<dbReference type="InterPro" id="IPR023457">
    <property type="entry name" value="Met-tRNA_synth_2"/>
</dbReference>
<dbReference type="InterPro" id="IPR015413">
    <property type="entry name" value="Methionyl/Leucyl_tRNA_Synth"/>
</dbReference>
<dbReference type="InterPro" id="IPR033911">
    <property type="entry name" value="MetRS_core"/>
</dbReference>
<dbReference type="InterPro" id="IPR014729">
    <property type="entry name" value="Rossmann-like_a/b/a_fold"/>
</dbReference>
<dbReference type="InterPro" id="IPR009080">
    <property type="entry name" value="tRNAsynth_Ia_anticodon-bd"/>
</dbReference>
<dbReference type="NCBIfam" id="TIGR00398">
    <property type="entry name" value="metG"/>
    <property type="match status" value="1"/>
</dbReference>
<dbReference type="PANTHER" id="PTHR43326:SF1">
    <property type="entry name" value="METHIONINE--TRNA LIGASE, MITOCHONDRIAL"/>
    <property type="match status" value="1"/>
</dbReference>
<dbReference type="PANTHER" id="PTHR43326">
    <property type="entry name" value="METHIONYL-TRNA SYNTHETASE"/>
    <property type="match status" value="1"/>
</dbReference>
<dbReference type="Pfam" id="PF19303">
    <property type="entry name" value="Anticodon_3"/>
    <property type="match status" value="1"/>
</dbReference>
<dbReference type="Pfam" id="PF09334">
    <property type="entry name" value="tRNA-synt_1g"/>
    <property type="match status" value="1"/>
</dbReference>
<dbReference type="PRINTS" id="PR01041">
    <property type="entry name" value="TRNASYNTHMET"/>
</dbReference>
<dbReference type="SUPFAM" id="SSF47323">
    <property type="entry name" value="Anticodon-binding domain of a subclass of class I aminoacyl-tRNA synthetases"/>
    <property type="match status" value="1"/>
</dbReference>
<dbReference type="SUPFAM" id="SSF52374">
    <property type="entry name" value="Nucleotidylyl transferase"/>
    <property type="match status" value="1"/>
</dbReference>